<proteinExistence type="inferred from homology"/>
<sequence>MNIIEANVATPDARVAITIARFNNFINDSLLEGAIDALKRIGQVKDENITVVWVPGAYELPLAAGALAKTGKYDAVIALGTVIRGGTAHFEYVAGGASNGLAHVAQDSEIPVAFGVLTTESIEQAIERAGTKAGNKGAEAALTALEMINVLKAIKA</sequence>
<keyword id="KW-0686">Riboflavin biosynthesis</keyword>
<keyword id="KW-0808">Transferase</keyword>
<comment type="function">
    <text evidence="1">Catalyzes the formation of 6,7-dimethyl-8-ribityllumazine by condensation of 5-amino-6-(D-ribitylamino)uracil with 3,4-dihydroxy-2-butanone 4-phosphate. This is the penultimate step in the biosynthesis of riboflavin.</text>
</comment>
<comment type="catalytic activity">
    <reaction evidence="1">
        <text>(2S)-2-hydroxy-3-oxobutyl phosphate + 5-amino-6-(D-ribitylamino)uracil = 6,7-dimethyl-8-(1-D-ribityl)lumazine + phosphate + 2 H2O + H(+)</text>
        <dbReference type="Rhea" id="RHEA:26152"/>
        <dbReference type="ChEBI" id="CHEBI:15377"/>
        <dbReference type="ChEBI" id="CHEBI:15378"/>
        <dbReference type="ChEBI" id="CHEBI:15934"/>
        <dbReference type="ChEBI" id="CHEBI:43474"/>
        <dbReference type="ChEBI" id="CHEBI:58201"/>
        <dbReference type="ChEBI" id="CHEBI:58830"/>
        <dbReference type="EC" id="2.5.1.78"/>
    </reaction>
</comment>
<comment type="pathway">
    <text evidence="1">Cofactor biosynthesis; riboflavin biosynthesis; riboflavin from 2-hydroxy-3-oxobutyl phosphate and 5-amino-6-(D-ribitylamino)uracil: step 1/2.</text>
</comment>
<comment type="subunit">
    <text evidence="1">Forms an icosahedral capsid composed of 60 subunits, arranged as a dodecamer of pentamers.</text>
</comment>
<comment type="similarity">
    <text evidence="1">Belongs to the DMRL synthase family.</text>
</comment>
<evidence type="ECO:0000255" key="1">
    <source>
        <dbReference type="HAMAP-Rule" id="MF_00178"/>
    </source>
</evidence>
<accession>B1XF03</accession>
<feature type="chain" id="PRO_1000098188" description="6,7-dimethyl-8-ribityllumazine synthase">
    <location>
        <begin position="1"/>
        <end position="156"/>
    </location>
</feature>
<feature type="active site" description="Proton donor" evidence="1">
    <location>
        <position position="89"/>
    </location>
</feature>
<feature type="binding site" evidence="1">
    <location>
        <position position="22"/>
    </location>
    <ligand>
        <name>5-amino-6-(D-ribitylamino)uracil</name>
        <dbReference type="ChEBI" id="CHEBI:15934"/>
    </ligand>
</feature>
<feature type="binding site" evidence="1">
    <location>
        <begin position="57"/>
        <end position="59"/>
    </location>
    <ligand>
        <name>5-amino-6-(D-ribitylamino)uracil</name>
        <dbReference type="ChEBI" id="CHEBI:15934"/>
    </ligand>
</feature>
<feature type="binding site" evidence="1">
    <location>
        <begin position="81"/>
        <end position="83"/>
    </location>
    <ligand>
        <name>5-amino-6-(D-ribitylamino)uracil</name>
        <dbReference type="ChEBI" id="CHEBI:15934"/>
    </ligand>
</feature>
<feature type="binding site" evidence="1">
    <location>
        <begin position="86"/>
        <end position="87"/>
    </location>
    <ligand>
        <name>(2S)-2-hydroxy-3-oxobutyl phosphate</name>
        <dbReference type="ChEBI" id="CHEBI:58830"/>
    </ligand>
</feature>
<feature type="binding site" evidence="1">
    <location>
        <position position="114"/>
    </location>
    <ligand>
        <name>5-amino-6-(D-ribitylamino)uracil</name>
        <dbReference type="ChEBI" id="CHEBI:15934"/>
    </ligand>
</feature>
<feature type="binding site" evidence="1">
    <location>
        <position position="128"/>
    </location>
    <ligand>
        <name>(2S)-2-hydroxy-3-oxobutyl phosphate</name>
        <dbReference type="ChEBI" id="CHEBI:58830"/>
    </ligand>
</feature>
<protein>
    <recommendedName>
        <fullName evidence="1">6,7-dimethyl-8-ribityllumazine synthase</fullName>
        <shortName evidence="1">DMRL synthase</shortName>
        <shortName evidence="1">LS</shortName>
        <shortName evidence="1">Lumazine synthase</shortName>
        <ecNumber evidence="1">2.5.1.78</ecNumber>
    </recommendedName>
</protein>
<gene>
    <name evidence="1" type="primary">ribH</name>
    <name type="ordered locus">ECDH10B_0371</name>
</gene>
<organism>
    <name type="scientific">Escherichia coli (strain K12 / DH10B)</name>
    <dbReference type="NCBI Taxonomy" id="316385"/>
    <lineage>
        <taxon>Bacteria</taxon>
        <taxon>Pseudomonadati</taxon>
        <taxon>Pseudomonadota</taxon>
        <taxon>Gammaproteobacteria</taxon>
        <taxon>Enterobacterales</taxon>
        <taxon>Enterobacteriaceae</taxon>
        <taxon>Escherichia</taxon>
    </lineage>
</organism>
<dbReference type="EC" id="2.5.1.78" evidence="1"/>
<dbReference type="EMBL" id="CP000948">
    <property type="protein sequence ID" value="ACB01543.1"/>
    <property type="molecule type" value="Genomic_DNA"/>
</dbReference>
<dbReference type="SMR" id="B1XF03"/>
<dbReference type="KEGG" id="ecd:ECDH10B_0371"/>
<dbReference type="HOGENOM" id="CLU_089358_1_1_6"/>
<dbReference type="UniPathway" id="UPA00275">
    <property type="reaction ID" value="UER00404"/>
</dbReference>
<dbReference type="GO" id="GO:0005829">
    <property type="term" value="C:cytosol"/>
    <property type="evidence" value="ECO:0007669"/>
    <property type="project" value="TreeGrafter"/>
</dbReference>
<dbReference type="GO" id="GO:0009349">
    <property type="term" value="C:riboflavin synthase complex"/>
    <property type="evidence" value="ECO:0007669"/>
    <property type="project" value="InterPro"/>
</dbReference>
<dbReference type="GO" id="GO:0000906">
    <property type="term" value="F:6,7-dimethyl-8-ribityllumazine synthase activity"/>
    <property type="evidence" value="ECO:0007669"/>
    <property type="project" value="UniProtKB-UniRule"/>
</dbReference>
<dbReference type="GO" id="GO:0009231">
    <property type="term" value="P:riboflavin biosynthetic process"/>
    <property type="evidence" value="ECO:0007669"/>
    <property type="project" value="UniProtKB-UniRule"/>
</dbReference>
<dbReference type="CDD" id="cd09209">
    <property type="entry name" value="Lumazine_synthase-I"/>
    <property type="match status" value="1"/>
</dbReference>
<dbReference type="FunFam" id="3.40.50.960:FF:000001">
    <property type="entry name" value="6,7-dimethyl-8-ribityllumazine synthase"/>
    <property type="match status" value="1"/>
</dbReference>
<dbReference type="Gene3D" id="3.40.50.960">
    <property type="entry name" value="Lumazine/riboflavin synthase"/>
    <property type="match status" value="1"/>
</dbReference>
<dbReference type="HAMAP" id="MF_00178">
    <property type="entry name" value="Lumazine_synth"/>
    <property type="match status" value="1"/>
</dbReference>
<dbReference type="InterPro" id="IPR034964">
    <property type="entry name" value="LS"/>
</dbReference>
<dbReference type="InterPro" id="IPR002180">
    <property type="entry name" value="LS/RS"/>
</dbReference>
<dbReference type="InterPro" id="IPR036467">
    <property type="entry name" value="LS/RS_sf"/>
</dbReference>
<dbReference type="NCBIfam" id="TIGR00114">
    <property type="entry name" value="lumazine-synth"/>
    <property type="match status" value="1"/>
</dbReference>
<dbReference type="NCBIfam" id="NF000812">
    <property type="entry name" value="PRK00061.1-4"/>
    <property type="match status" value="1"/>
</dbReference>
<dbReference type="PANTHER" id="PTHR21058:SF0">
    <property type="entry name" value="6,7-DIMETHYL-8-RIBITYLLUMAZINE SYNTHASE"/>
    <property type="match status" value="1"/>
</dbReference>
<dbReference type="PANTHER" id="PTHR21058">
    <property type="entry name" value="6,7-DIMETHYL-8-RIBITYLLUMAZINE SYNTHASE DMRL SYNTHASE LUMAZINE SYNTHASE"/>
    <property type="match status" value="1"/>
</dbReference>
<dbReference type="Pfam" id="PF00885">
    <property type="entry name" value="DMRL_synthase"/>
    <property type="match status" value="1"/>
</dbReference>
<dbReference type="SUPFAM" id="SSF52121">
    <property type="entry name" value="Lumazine synthase"/>
    <property type="match status" value="1"/>
</dbReference>
<reference key="1">
    <citation type="journal article" date="2008" name="J. Bacteriol.">
        <title>The complete genome sequence of Escherichia coli DH10B: insights into the biology of a laboratory workhorse.</title>
        <authorList>
            <person name="Durfee T."/>
            <person name="Nelson R."/>
            <person name="Baldwin S."/>
            <person name="Plunkett G. III"/>
            <person name="Burland V."/>
            <person name="Mau B."/>
            <person name="Petrosino J.F."/>
            <person name="Qin X."/>
            <person name="Muzny D.M."/>
            <person name="Ayele M."/>
            <person name="Gibbs R.A."/>
            <person name="Csorgo B."/>
            <person name="Posfai G."/>
            <person name="Weinstock G.M."/>
            <person name="Blattner F.R."/>
        </authorList>
    </citation>
    <scope>NUCLEOTIDE SEQUENCE [LARGE SCALE GENOMIC DNA]</scope>
    <source>
        <strain>K12 / DH10B</strain>
    </source>
</reference>
<name>RISB_ECODH</name>